<gene>
    <name evidence="6" type="primary">MTERF5</name>
    <name evidence="5" type="synonym">MDA1</name>
    <name evidence="8" type="ordered locus">At4g14605</name>
</gene>
<sequence length="493" mass="55961">MQSLSQLGPSEIFLVARREKPSTRAQLWFTGRLSFRQETNGIRLKNRVEFSPRPVPPNLIAAEKEEAKAVLTLFFKKQGLSNSLSSRLINKSDLFIDHLVSRLHSVHKARYLVGRELTTLEIRDSLIPYLEQLHEEHGDLLAELVVSFPDPPAEPRLVASSPVSVLPPRGDTDSAADTRKLRAVSRVSELDTEGALRPQTLYLLDLGLNLEQIKTITRKFAAFPYYSLDGKIKPVVEFLLDLGIPKSDIPTILCKRPQICGISLTDNLKPTMAFLETLGIDKNQWAKIISRFPAILTYSRQKLTSTVEFLSQTGLTEEQIGRILTRCPNIMSYSVEDKLRPTMEYFRSLNVDVAVLLHRCPQTFGLSIESNLKPVTEFFLEKGFGLDEIGIMISRYGALYTFSLKENVMPKWDYFQTMDYPKSELVKFPQFFGYSLQERIKPRYELVQRSGVRLLLNQVLSLSGIEFEKVVKKKMMKLVSNNVIAEQSSGGLL</sequence>
<organism>
    <name type="scientific">Arabidopsis thaliana</name>
    <name type="common">Mouse-ear cress</name>
    <dbReference type="NCBI Taxonomy" id="3702"/>
    <lineage>
        <taxon>Eukaryota</taxon>
        <taxon>Viridiplantae</taxon>
        <taxon>Streptophyta</taxon>
        <taxon>Embryophyta</taxon>
        <taxon>Tracheophyta</taxon>
        <taxon>Spermatophyta</taxon>
        <taxon>Magnoliopsida</taxon>
        <taxon>eudicotyledons</taxon>
        <taxon>Gunneridae</taxon>
        <taxon>Pentapetalae</taxon>
        <taxon>rosids</taxon>
        <taxon>malvids</taxon>
        <taxon>Brassicales</taxon>
        <taxon>Brassicaceae</taxon>
        <taxon>Camelineae</taxon>
        <taxon>Arabidopsis</taxon>
    </lineage>
</organism>
<proteinExistence type="evidence at protein level"/>
<feature type="transit peptide" description="Chloroplast" evidence="1">
    <location>
        <begin position="1"/>
        <end position="43"/>
    </location>
</feature>
<feature type="chain" id="PRO_0000436198" description="Transcription termination factor MTERF5, chloroplastic">
    <location>
        <begin position="44"/>
        <end position="493"/>
    </location>
</feature>
<accession>F4JVI3</accession>
<dbReference type="EMBL" id="Z97336">
    <property type="status" value="NOT_ANNOTATED_CDS"/>
    <property type="molecule type" value="Genomic_DNA"/>
</dbReference>
<dbReference type="EMBL" id="AL161539">
    <property type="status" value="NOT_ANNOTATED_CDS"/>
    <property type="molecule type" value="Genomic_DNA"/>
</dbReference>
<dbReference type="EMBL" id="CP002687">
    <property type="protein sequence ID" value="AEE83465.1"/>
    <property type="molecule type" value="Genomic_DNA"/>
</dbReference>
<dbReference type="EMBL" id="CP002687">
    <property type="protein sequence ID" value="ANM66035.1"/>
    <property type="molecule type" value="Genomic_DNA"/>
</dbReference>
<dbReference type="EMBL" id="AK226653">
    <property type="status" value="NOT_ANNOTATED_CDS"/>
    <property type="molecule type" value="mRNA"/>
</dbReference>
<dbReference type="RefSeq" id="NP_001327961.1">
    <property type="nucleotide sequence ID" value="NM_001340949.1"/>
</dbReference>
<dbReference type="RefSeq" id="NP_567435.4">
    <property type="nucleotide sequence ID" value="NM_117541.9"/>
</dbReference>
<dbReference type="SMR" id="F4JVI3"/>
<dbReference type="FunCoup" id="F4JVI3">
    <property type="interactions" value="820"/>
</dbReference>
<dbReference type="IntAct" id="F4JVI3">
    <property type="interactions" value="2"/>
</dbReference>
<dbReference type="STRING" id="3702.F4JVI3"/>
<dbReference type="PaxDb" id="3702-AT4G14605.1"/>
<dbReference type="ProteomicsDB" id="250906"/>
<dbReference type="EnsemblPlants" id="AT4G14605.1">
    <property type="protein sequence ID" value="AT4G14605.1"/>
    <property type="gene ID" value="AT4G14605"/>
</dbReference>
<dbReference type="EnsemblPlants" id="AT4G14605.2">
    <property type="protein sequence ID" value="AT4G14605.2"/>
    <property type="gene ID" value="AT4G14605"/>
</dbReference>
<dbReference type="GeneID" id="827109"/>
<dbReference type="Gramene" id="AT4G14605.1">
    <property type="protein sequence ID" value="AT4G14605.1"/>
    <property type="gene ID" value="AT4G14605"/>
</dbReference>
<dbReference type="Gramene" id="AT4G14605.2">
    <property type="protein sequence ID" value="AT4G14605.2"/>
    <property type="gene ID" value="AT4G14605"/>
</dbReference>
<dbReference type="KEGG" id="ath:AT4G14605"/>
<dbReference type="Araport" id="AT4G14605"/>
<dbReference type="TAIR" id="AT4G14605">
    <property type="gene designation" value="MDA1"/>
</dbReference>
<dbReference type="eggNOG" id="KOG1267">
    <property type="taxonomic scope" value="Eukaryota"/>
</dbReference>
<dbReference type="HOGENOM" id="CLU_028077_0_0_1"/>
<dbReference type="InParanoid" id="F4JVI3"/>
<dbReference type="OMA" id="CRAKFAD"/>
<dbReference type="OrthoDB" id="637682at2759"/>
<dbReference type="PhylomeDB" id="F4JVI3"/>
<dbReference type="PRO" id="PR:F4JVI3"/>
<dbReference type="Proteomes" id="UP000006548">
    <property type="component" value="Chromosome 4"/>
</dbReference>
<dbReference type="ExpressionAtlas" id="F4JVI3">
    <property type="expression patterns" value="baseline and differential"/>
</dbReference>
<dbReference type="GO" id="GO:0009507">
    <property type="term" value="C:chloroplast"/>
    <property type="evidence" value="ECO:0000314"/>
    <property type="project" value="UniProtKB"/>
</dbReference>
<dbReference type="GO" id="GO:1990837">
    <property type="term" value="F:sequence-specific double-stranded DNA binding"/>
    <property type="evidence" value="ECO:0000314"/>
    <property type="project" value="UniProtKB"/>
</dbReference>
<dbReference type="GO" id="GO:0009658">
    <property type="term" value="P:chloroplast organization"/>
    <property type="evidence" value="ECO:0000315"/>
    <property type="project" value="TAIR"/>
</dbReference>
<dbReference type="GO" id="GO:0006353">
    <property type="term" value="P:DNA-templated transcription termination"/>
    <property type="evidence" value="ECO:0007669"/>
    <property type="project" value="UniProtKB-KW"/>
</dbReference>
<dbReference type="GO" id="GO:0042793">
    <property type="term" value="P:plastid transcription"/>
    <property type="evidence" value="ECO:0000314"/>
    <property type="project" value="UniProtKB"/>
</dbReference>
<dbReference type="GO" id="GO:0006355">
    <property type="term" value="P:regulation of DNA-templated transcription"/>
    <property type="evidence" value="ECO:0000314"/>
    <property type="project" value="UniProtKB"/>
</dbReference>
<dbReference type="GO" id="GO:0009737">
    <property type="term" value="P:response to abscisic acid"/>
    <property type="evidence" value="ECO:0000315"/>
    <property type="project" value="TAIR"/>
</dbReference>
<dbReference type="GO" id="GO:0006970">
    <property type="term" value="P:response to osmotic stress"/>
    <property type="evidence" value="ECO:0000315"/>
    <property type="project" value="TAIR"/>
</dbReference>
<dbReference type="GO" id="GO:0009651">
    <property type="term" value="P:response to salt stress"/>
    <property type="evidence" value="ECO:0000315"/>
    <property type="project" value="TAIR"/>
</dbReference>
<dbReference type="FunFam" id="1.25.70.10:FF:000008">
    <property type="entry name" value="Transcription termination factor MTERF5 chloroplastic"/>
    <property type="match status" value="1"/>
</dbReference>
<dbReference type="Gene3D" id="1.25.70.10">
    <property type="entry name" value="Transcription termination factor 3, mitochondrial"/>
    <property type="match status" value="1"/>
</dbReference>
<dbReference type="InterPro" id="IPR003690">
    <property type="entry name" value="MTERF"/>
</dbReference>
<dbReference type="InterPro" id="IPR038538">
    <property type="entry name" value="MTERF_sf"/>
</dbReference>
<dbReference type="PANTHER" id="PTHR13068">
    <property type="entry name" value="CGI-12 PROTEIN-RELATED"/>
    <property type="match status" value="1"/>
</dbReference>
<dbReference type="PANTHER" id="PTHR13068:SF9">
    <property type="entry name" value="TRANSCRIPTION TERMINATION FACTOR MTERF5, CHLOROPLASTIC"/>
    <property type="match status" value="1"/>
</dbReference>
<dbReference type="Pfam" id="PF02536">
    <property type="entry name" value="mTERF"/>
    <property type="match status" value="2"/>
</dbReference>
<dbReference type="SMART" id="SM00733">
    <property type="entry name" value="Mterf"/>
    <property type="match status" value="8"/>
</dbReference>
<protein>
    <recommendedName>
        <fullName evidence="7">Transcription termination factor MTERF5, chloroplastic</fullName>
    </recommendedName>
    <alternativeName>
        <fullName evidence="6">Mitochondrial transcription termination factor 5</fullName>
        <shortName evidence="6">mTERF5</shortName>
    </alternativeName>
    <alternativeName>
        <fullName evidence="5">Protein MTERF DEFECTIVE IN ARABIDOPSIS 1</fullName>
    </alternativeName>
</protein>
<keyword id="KW-0150">Chloroplast</keyword>
<keyword id="KW-0238">DNA-binding</keyword>
<keyword id="KW-0934">Plastid</keyword>
<keyword id="KW-1185">Reference proteome</keyword>
<keyword id="KW-0804">Transcription</keyword>
<keyword id="KW-0805">Transcription regulation</keyword>
<keyword id="KW-0806">Transcription termination</keyword>
<keyword id="KW-0809">Transit peptide</keyword>
<reference key="1">
    <citation type="journal article" date="1998" name="Nature">
        <title>Analysis of 1.9 Mb of contiguous sequence from chromosome 4 of Arabidopsis thaliana.</title>
        <authorList>
            <person name="Bevan M."/>
            <person name="Bancroft I."/>
            <person name="Bent E."/>
            <person name="Love K."/>
            <person name="Goodman H.M."/>
            <person name="Dean C."/>
            <person name="Bergkamp R."/>
            <person name="Dirkse W."/>
            <person name="van Staveren M."/>
            <person name="Stiekema W."/>
            <person name="Drost L."/>
            <person name="Ridley P."/>
            <person name="Hudson S.-A."/>
            <person name="Patel K."/>
            <person name="Murphy G."/>
            <person name="Piffanelli P."/>
            <person name="Wedler H."/>
            <person name="Wedler E."/>
            <person name="Wambutt R."/>
            <person name="Weitzenegger T."/>
            <person name="Pohl T."/>
            <person name="Terryn N."/>
            <person name="Gielen J."/>
            <person name="Villarroel R."/>
            <person name="De Clercq R."/>
            <person name="van Montagu M."/>
            <person name="Lecharny A."/>
            <person name="Aubourg S."/>
            <person name="Gy I."/>
            <person name="Kreis M."/>
            <person name="Lao N."/>
            <person name="Kavanagh T."/>
            <person name="Hempel S."/>
            <person name="Kotter P."/>
            <person name="Entian K.-D."/>
            <person name="Rieger M."/>
            <person name="Schaefer M."/>
            <person name="Funk B."/>
            <person name="Mueller-Auer S."/>
            <person name="Silvey M."/>
            <person name="James R."/>
            <person name="Monfort A."/>
            <person name="Pons A."/>
            <person name="Puigdomenech P."/>
            <person name="Douka A."/>
            <person name="Voukelatou E."/>
            <person name="Milioni D."/>
            <person name="Hatzopoulos P."/>
            <person name="Piravandi E."/>
            <person name="Obermaier B."/>
            <person name="Hilbert H."/>
            <person name="Duesterhoeft A."/>
            <person name="Moores T."/>
            <person name="Jones J.D.G."/>
            <person name="Eneva T."/>
            <person name="Palme K."/>
            <person name="Benes V."/>
            <person name="Rechmann S."/>
            <person name="Ansorge W."/>
            <person name="Cooke R."/>
            <person name="Berger C."/>
            <person name="Delseny M."/>
            <person name="Voet M."/>
            <person name="Volckaert G."/>
            <person name="Mewes H.-W."/>
            <person name="Klosterman S."/>
            <person name="Schueller C."/>
            <person name="Chalwatzis N."/>
        </authorList>
    </citation>
    <scope>NUCLEOTIDE SEQUENCE [LARGE SCALE GENOMIC DNA]</scope>
    <source>
        <strain>cv. Columbia</strain>
    </source>
</reference>
<reference key="2">
    <citation type="journal article" date="1999" name="Nature">
        <title>Sequence and analysis of chromosome 4 of the plant Arabidopsis thaliana.</title>
        <authorList>
            <person name="Mayer K.F.X."/>
            <person name="Schueller C."/>
            <person name="Wambutt R."/>
            <person name="Murphy G."/>
            <person name="Volckaert G."/>
            <person name="Pohl T."/>
            <person name="Duesterhoeft A."/>
            <person name="Stiekema W."/>
            <person name="Entian K.-D."/>
            <person name="Terryn N."/>
            <person name="Harris B."/>
            <person name="Ansorge W."/>
            <person name="Brandt P."/>
            <person name="Grivell L.A."/>
            <person name="Rieger M."/>
            <person name="Weichselgartner M."/>
            <person name="de Simone V."/>
            <person name="Obermaier B."/>
            <person name="Mache R."/>
            <person name="Mueller M."/>
            <person name="Kreis M."/>
            <person name="Delseny M."/>
            <person name="Puigdomenech P."/>
            <person name="Watson M."/>
            <person name="Schmidtheini T."/>
            <person name="Reichert B."/>
            <person name="Portetelle D."/>
            <person name="Perez-Alonso M."/>
            <person name="Boutry M."/>
            <person name="Bancroft I."/>
            <person name="Vos P."/>
            <person name="Hoheisel J."/>
            <person name="Zimmermann W."/>
            <person name="Wedler H."/>
            <person name="Ridley P."/>
            <person name="Langham S.-A."/>
            <person name="McCullagh B."/>
            <person name="Bilham L."/>
            <person name="Robben J."/>
            <person name="van der Schueren J."/>
            <person name="Grymonprez B."/>
            <person name="Chuang Y.-J."/>
            <person name="Vandenbussche F."/>
            <person name="Braeken M."/>
            <person name="Weltjens I."/>
            <person name="Voet M."/>
            <person name="Bastiaens I."/>
            <person name="Aert R."/>
            <person name="Defoor E."/>
            <person name="Weitzenegger T."/>
            <person name="Bothe G."/>
            <person name="Ramsperger U."/>
            <person name="Hilbert H."/>
            <person name="Braun M."/>
            <person name="Holzer E."/>
            <person name="Brandt A."/>
            <person name="Peters S."/>
            <person name="van Staveren M."/>
            <person name="Dirkse W."/>
            <person name="Mooijman P."/>
            <person name="Klein Lankhorst R."/>
            <person name="Rose M."/>
            <person name="Hauf J."/>
            <person name="Koetter P."/>
            <person name="Berneiser S."/>
            <person name="Hempel S."/>
            <person name="Feldpausch M."/>
            <person name="Lamberth S."/>
            <person name="Van den Daele H."/>
            <person name="De Keyser A."/>
            <person name="Buysshaert C."/>
            <person name="Gielen J."/>
            <person name="Villarroel R."/>
            <person name="De Clercq R."/>
            <person name="van Montagu M."/>
            <person name="Rogers J."/>
            <person name="Cronin A."/>
            <person name="Quail M.A."/>
            <person name="Bray-Allen S."/>
            <person name="Clark L."/>
            <person name="Doggett J."/>
            <person name="Hall S."/>
            <person name="Kay M."/>
            <person name="Lennard N."/>
            <person name="McLay K."/>
            <person name="Mayes R."/>
            <person name="Pettett A."/>
            <person name="Rajandream M.A."/>
            <person name="Lyne M."/>
            <person name="Benes V."/>
            <person name="Rechmann S."/>
            <person name="Borkova D."/>
            <person name="Bloecker H."/>
            <person name="Scharfe M."/>
            <person name="Grimm M."/>
            <person name="Loehnert T.-H."/>
            <person name="Dose S."/>
            <person name="de Haan M."/>
            <person name="Maarse A.C."/>
            <person name="Schaefer M."/>
            <person name="Mueller-Auer S."/>
            <person name="Gabel C."/>
            <person name="Fuchs M."/>
            <person name="Fartmann B."/>
            <person name="Granderath K."/>
            <person name="Dauner D."/>
            <person name="Herzl A."/>
            <person name="Neumann S."/>
            <person name="Argiriou A."/>
            <person name="Vitale D."/>
            <person name="Liguori R."/>
            <person name="Piravandi E."/>
            <person name="Massenet O."/>
            <person name="Quigley F."/>
            <person name="Clabauld G."/>
            <person name="Muendlein A."/>
            <person name="Felber R."/>
            <person name="Schnabl S."/>
            <person name="Hiller R."/>
            <person name="Schmidt W."/>
            <person name="Lecharny A."/>
            <person name="Aubourg S."/>
            <person name="Chefdor F."/>
            <person name="Cooke R."/>
            <person name="Berger C."/>
            <person name="Monfort A."/>
            <person name="Casacuberta E."/>
            <person name="Gibbons T."/>
            <person name="Weber N."/>
            <person name="Vandenbol M."/>
            <person name="Bargues M."/>
            <person name="Terol J."/>
            <person name="Torres A."/>
            <person name="Perez-Perez A."/>
            <person name="Purnelle B."/>
            <person name="Bent E."/>
            <person name="Johnson S."/>
            <person name="Tacon D."/>
            <person name="Jesse T."/>
            <person name="Heijnen L."/>
            <person name="Schwarz S."/>
            <person name="Scholler P."/>
            <person name="Heber S."/>
            <person name="Francs P."/>
            <person name="Bielke C."/>
            <person name="Frishman D."/>
            <person name="Haase D."/>
            <person name="Lemcke K."/>
            <person name="Mewes H.-W."/>
            <person name="Stocker S."/>
            <person name="Zaccaria P."/>
            <person name="Bevan M."/>
            <person name="Wilson R.K."/>
            <person name="de la Bastide M."/>
            <person name="Habermann K."/>
            <person name="Parnell L."/>
            <person name="Dedhia N."/>
            <person name="Gnoj L."/>
            <person name="Schutz K."/>
            <person name="Huang E."/>
            <person name="Spiegel L."/>
            <person name="Sekhon M."/>
            <person name="Murray J."/>
            <person name="Sheet P."/>
            <person name="Cordes M."/>
            <person name="Abu-Threideh J."/>
            <person name="Stoneking T."/>
            <person name="Kalicki J."/>
            <person name="Graves T."/>
            <person name="Harmon G."/>
            <person name="Edwards J."/>
            <person name="Latreille P."/>
            <person name="Courtney L."/>
            <person name="Cloud J."/>
            <person name="Abbott A."/>
            <person name="Scott K."/>
            <person name="Johnson D."/>
            <person name="Minx P."/>
            <person name="Bentley D."/>
            <person name="Fulton B."/>
            <person name="Miller N."/>
            <person name="Greco T."/>
            <person name="Kemp K."/>
            <person name="Kramer J."/>
            <person name="Fulton L."/>
            <person name="Mardis E."/>
            <person name="Dante M."/>
            <person name="Pepin K."/>
            <person name="Hillier L.W."/>
            <person name="Nelson J."/>
            <person name="Spieth J."/>
            <person name="Ryan E."/>
            <person name="Andrews S."/>
            <person name="Geisel C."/>
            <person name="Layman D."/>
            <person name="Du H."/>
            <person name="Ali J."/>
            <person name="Berghoff A."/>
            <person name="Jones K."/>
            <person name="Drone K."/>
            <person name="Cotton M."/>
            <person name="Joshu C."/>
            <person name="Antonoiu B."/>
            <person name="Zidanic M."/>
            <person name="Strong C."/>
            <person name="Sun H."/>
            <person name="Lamar B."/>
            <person name="Yordan C."/>
            <person name="Ma P."/>
            <person name="Zhong J."/>
            <person name="Preston R."/>
            <person name="Vil D."/>
            <person name="Shekher M."/>
            <person name="Matero A."/>
            <person name="Shah R."/>
            <person name="Swaby I.K."/>
            <person name="O'Shaughnessy A."/>
            <person name="Rodriguez M."/>
            <person name="Hoffman J."/>
            <person name="Till S."/>
            <person name="Granat S."/>
            <person name="Shohdy N."/>
            <person name="Hasegawa A."/>
            <person name="Hameed A."/>
            <person name="Lodhi M."/>
            <person name="Johnson A."/>
            <person name="Chen E."/>
            <person name="Marra M.A."/>
            <person name="Martienssen R."/>
            <person name="McCombie W.R."/>
        </authorList>
    </citation>
    <scope>NUCLEOTIDE SEQUENCE [LARGE SCALE GENOMIC DNA]</scope>
    <source>
        <strain>cv. Columbia</strain>
    </source>
</reference>
<reference key="3">
    <citation type="journal article" date="2017" name="Plant J.">
        <title>Araport11: a complete reannotation of the Arabidopsis thaliana reference genome.</title>
        <authorList>
            <person name="Cheng C.Y."/>
            <person name="Krishnakumar V."/>
            <person name="Chan A.P."/>
            <person name="Thibaud-Nissen F."/>
            <person name="Schobel S."/>
            <person name="Town C.D."/>
        </authorList>
    </citation>
    <scope>GENOME REANNOTATION</scope>
    <source>
        <strain>cv. Columbia</strain>
    </source>
</reference>
<reference key="4">
    <citation type="submission" date="2006-07" db="EMBL/GenBank/DDBJ databases">
        <title>Large-scale analysis of RIKEN Arabidopsis full-length (RAFL) cDNAs.</title>
        <authorList>
            <person name="Totoki Y."/>
            <person name="Seki M."/>
            <person name="Ishida J."/>
            <person name="Nakajima M."/>
            <person name="Enju A."/>
            <person name="Kamiya A."/>
            <person name="Narusaka M."/>
            <person name="Shin-i T."/>
            <person name="Nakagawa M."/>
            <person name="Sakamoto N."/>
            <person name="Oishi K."/>
            <person name="Kohara Y."/>
            <person name="Kobayashi M."/>
            <person name="Toyoda A."/>
            <person name="Sakaki Y."/>
            <person name="Sakurai T."/>
            <person name="Iida K."/>
            <person name="Akiyama K."/>
            <person name="Satou M."/>
            <person name="Toyoda T."/>
            <person name="Konagaya A."/>
            <person name="Carninci P."/>
            <person name="Kawai J."/>
            <person name="Hayashizaki Y."/>
            <person name="Shinozaki K."/>
        </authorList>
    </citation>
    <scope>NUCLEOTIDE SEQUENCE [LARGE SCALE MRNA]</scope>
    <source>
        <strain>cv. Columbia</strain>
    </source>
</reference>
<reference key="5">
    <citation type="journal article" date="2011" name="Proc. Natl. Acad. Sci. U.S.A.">
        <title>Plastid gene expression and plant development require a plastidic protein of the mitochondrial transcription termination factor family.</title>
        <authorList>
            <person name="Babiychuk E."/>
            <person name="Vandepoele K."/>
            <person name="Wissing J."/>
            <person name="Garcia-Diaz M."/>
            <person name="De Rycke R."/>
            <person name="Akbari H."/>
            <person name="Joubes J."/>
            <person name="Beeckman T."/>
            <person name="Jaensch L."/>
            <person name="Frentzen M."/>
            <person name="Van Montagu M.C."/>
            <person name="Kushnir S."/>
        </authorList>
    </citation>
    <scope>SUBCELLULAR LOCATION</scope>
</reference>
<reference key="6">
    <citation type="journal article" date="2012" name="Front. Plant Sci.">
        <title>Arabidopsis thaliana mTERF proteins: evolution and functional classification.</title>
        <authorList>
            <person name="Kleine T."/>
        </authorList>
    </citation>
    <scope>GENE FAMILY</scope>
</reference>
<reference key="7">
    <citation type="journal article" date="2012" name="PLoS ONE">
        <title>Arabidopsis MDA1, a nuclear-encoded protein, functions in chloroplast development and abiotic stress responses.</title>
        <authorList>
            <person name="Robles P."/>
            <person name="Micol J.L."/>
            <person name="Quesada V."/>
        </authorList>
    </citation>
    <scope>FUNCTION</scope>
    <scope>TISSUE SPECIFICITY</scope>
    <scope>DISRUPTION PHENOTYPE</scope>
</reference>
<reference key="8">
    <citation type="journal article" date="2019" name="Mol. Plant">
        <title>mTERF5 acts as a transcriptional pausing factor to positively regulate transcription of chloroplast psbEFLJ.</title>
        <authorList>
            <person name="Ding S."/>
            <person name="Zhang Y."/>
            <person name="Hu Z."/>
            <person name="Huang X."/>
            <person name="Zhang B."/>
            <person name="Lu Q."/>
            <person name="Wen X."/>
            <person name="Wang Y."/>
            <person name="Lu C."/>
        </authorList>
    </citation>
    <scope>FUNCTION</scope>
    <scope>DISRUPTION PHENOTYPE</scope>
    <scope>INTERACTION WITH PTAC6</scope>
    <scope>SUBCELLULAR LOCATION</scope>
    <source>
        <strain>cv. Columbia</strain>
    </source>
</reference>
<evidence type="ECO:0000255" key="1"/>
<evidence type="ECO:0000269" key="2">
    <source>
    </source>
</evidence>
<evidence type="ECO:0000269" key="3">
    <source>
    </source>
</evidence>
<evidence type="ECO:0000269" key="4">
    <source>
    </source>
</evidence>
<evidence type="ECO:0000303" key="5">
    <source>
    </source>
</evidence>
<evidence type="ECO:0000303" key="6">
    <source>
    </source>
</evidence>
<evidence type="ECO:0000305" key="7"/>
<evidence type="ECO:0000312" key="8">
    <source>
        <dbReference type="Araport" id="AT4G14605"/>
    </source>
</evidence>
<comment type="function">
    <text evidence="3 4">Transcription termination factor required for processing and steady-state levels of plastid transcripts (PubMed:22905186). Involved also in chloroplast transcriptional pausing, a general feature of chloroplast genes (PubMed:31128276). Specifically and positively regulates the transcription of chloroplast psbEFLJ encoding for photosystem II (PSII) core subunits psbE, psbF, psbL and psbJ; causes the plastid-encoded RNA polymerase (PEP) complex to pause at psbEFLJ by binding to the +30 to +51 region of double-stranded DNA, and recruits additional pTAC6 to the transcriptionally paused region of psbEFLJ (PubMed:31128276). May play a role in response to abiotic stresses (PubMed:22905186).</text>
</comment>
<comment type="subunit">
    <text evidence="4">Interacts with pTAC6.</text>
</comment>
<comment type="subcellular location">
    <subcellularLocation>
        <location evidence="2 4">Plastid</location>
        <location evidence="2 4">Chloroplast</location>
    </subcellularLocation>
</comment>
<comment type="tissue specificity">
    <text evidence="3">Expressed in roots, rosette leaves, cauline leaves, stems, flower buds and open flowers.</text>
</comment>
<comment type="disruption phenotype">
    <text evidence="3 4">Pale-green phenotype, reduced growth and altered structure of chloroplasts (PubMed:22905186, PubMed:31128276). Defect in photosystem II (PSII) function with strongly reduced levels of core subunits, including psbE, psbF, psbL and psbJ cotranscribed from psbEFLJ (PubMed:31128276). Enhanced osmotic stress tolerance and altered sugar responses during seedling establishment (PubMed:22905186).</text>
</comment>
<comment type="similarity">
    <text evidence="7">Belongs to the mTERF family.</text>
</comment>
<name>MTEF5_ARATH</name>